<protein>
    <recommendedName>
        <fullName evidence="1">Small capsomere-interacting protein</fullName>
    </recommendedName>
</protein>
<feature type="chain" id="PRO_0000406075" description="Small capsomere-interacting protein">
    <location>
        <begin position="1"/>
        <end position="179"/>
    </location>
</feature>
<feature type="region of interest" description="Disordered" evidence="2">
    <location>
        <begin position="107"/>
        <end position="179"/>
    </location>
</feature>
<feature type="compositionally biased region" description="Low complexity" evidence="2">
    <location>
        <begin position="118"/>
        <end position="171"/>
    </location>
</feature>
<organism>
    <name type="scientific">Equine herpesvirus 2 (strain 86/87)</name>
    <name type="common">EHV-2</name>
    <dbReference type="NCBI Taxonomy" id="82831"/>
    <lineage>
        <taxon>Viruses</taxon>
        <taxon>Duplodnaviria</taxon>
        <taxon>Heunggongvirae</taxon>
        <taxon>Peploviricota</taxon>
        <taxon>Herviviricetes</taxon>
        <taxon>Herpesvirales</taxon>
        <taxon>Orthoherpesviridae</taxon>
        <taxon>Gammaherpesvirinae</taxon>
        <taxon>Percavirus</taxon>
        <taxon>Percavirus equidgamma2</taxon>
        <taxon>Equid gammaherpesvirus 2</taxon>
    </lineage>
</organism>
<dbReference type="EMBL" id="U20824">
    <property type="protein sequence ID" value="AAC13853.1"/>
    <property type="molecule type" value="Genomic_DNA"/>
</dbReference>
<dbReference type="PIR" id="S55660">
    <property type="entry name" value="S55660"/>
</dbReference>
<dbReference type="KEGG" id="vg:1461020"/>
<dbReference type="Proteomes" id="UP000007083">
    <property type="component" value="Segment"/>
</dbReference>
<dbReference type="GO" id="GO:0042025">
    <property type="term" value="C:host cell nucleus"/>
    <property type="evidence" value="ECO:0007669"/>
    <property type="project" value="UniProtKB-SubCell"/>
</dbReference>
<dbReference type="GO" id="GO:0019028">
    <property type="term" value="C:viral capsid"/>
    <property type="evidence" value="ECO:0007669"/>
    <property type="project" value="UniProtKB-UniRule"/>
</dbReference>
<dbReference type="GO" id="GO:0016032">
    <property type="term" value="P:viral process"/>
    <property type="evidence" value="ECO:0007669"/>
    <property type="project" value="UniProtKB-UniRule"/>
</dbReference>
<dbReference type="HAMAP" id="MF_04022">
    <property type="entry name" value="HSV_SCP_gammahv"/>
    <property type="match status" value="1"/>
</dbReference>
<dbReference type="InterPro" id="IPR009299">
    <property type="entry name" value="Herpes_capsid"/>
</dbReference>
<dbReference type="Pfam" id="PF06112">
    <property type="entry name" value="Herpes_capsid"/>
    <property type="match status" value="1"/>
</dbReference>
<comment type="function">
    <text evidence="1">Participates in the assembly of the infectious particles by decorating the outer surface of the capsid shell and thus forming a layer between the capsid and the tegument. Complexes composed of the major capsid protein and small capsomere-interacting protein/SCP assemble together in the host cytoplasm and are translocated to the nucleus, where they accumulate and participate in capsid assembly.</text>
</comment>
<comment type="subunit">
    <text evidence="1">Interacts with the major capsid protein/MCP.</text>
</comment>
<comment type="subcellular location">
    <subcellularLocation>
        <location evidence="1">Virion</location>
    </subcellularLocation>
    <subcellularLocation>
        <location evidence="1">Host nucleus</location>
    </subcellularLocation>
</comment>
<comment type="similarity">
    <text evidence="1">Belongs to the herpesviridae small capsomere-interacting protein family.</text>
</comment>
<proteinExistence type="inferred from homology"/>
<reference key="1">
    <citation type="journal article" date="1995" name="J. Mol. Biol.">
        <title>The DNA sequence of equine herpesvirus 2.</title>
        <authorList>
            <person name="Telford E.A.R."/>
            <person name="Watson M.S."/>
            <person name="Aird H.C."/>
            <person name="Perry J."/>
            <person name="Davison A.J."/>
        </authorList>
    </citation>
    <scope>NUCLEOTIDE SEQUENCE [LARGE SCALE GENOMIC DNA]</scope>
</reference>
<gene>
    <name evidence="1" type="primary">SCP</name>
    <name type="ordered locus">65</name>
</gene>
<accession>Q66667</accession>
<keyword id="KW-0167">Capsid protein</keyword>
<keyword id="KW-1048">Host nucleus</keyword>
<keyword id="KW-1185">Reference proteome</keyword>
<keyword id="KW-0946">Virion</keyword>
<evidence type="ECO:0000255" key="1">
    <source>
        <dbReference type="HAMAP-Rule" id="MF_04022"/>
    </source>
</evidence>
<evidence type="ECO:0000256" key="2">
    <source>
        <dbReference type="SAM" id="MobiDB-lite"/>
    </source>
</evidence>
<sequence>MPRDEMEACELGDGEGYQPLRLPRVQGKLEEINPIVAAEVAALERRDRSDADYEKVKMLYVIYLRVHEIYDDQARIRLGVRRKKHLGDLTASRGAGLRSFEALSSMIPLPPETGEFDTGGTSSSVRSASGASGGAASTAASGGSASAAASGASGGSASQSDVSSRSRSQQAPGTKGKKQ</sequence>
<name>SCP_EHV2</name>
<organismHost>
    <name type="scientific">Equus caballus</name>
    <name type="common">Horse</name>
    <dbReference type="NCBI Taxonomy" id="9796"/>
</organismHost>